<sequence>MAVMGLGTDIIEIGRIEKQLTRSHRLAQRVLTATELAIFDEHSFPARYLAKRFAAKEAAVKALGIGIGNGISFQDVEVHNLPSGQPFLKFYAKFAQLCEQRNITSSHISISDEQHYAIATVILESP</sequence>
<feature type="chain" id="PRO_1000008472" description="Holo-[acyl-carrier-protein] synthase">
    <location>
        <begin position="1"/>
        <end position="126"/>
    </location>
</feature>
<feature type="binding site" evidence="1">
    <location>
        <position position="9"/>
    </location>
    <ligand>
        <name>Mg(2+)</name>
        <dbReference type="ChEBI" id="CHEBI:18420"/>
    </ligand>
</feature>
<feature type="binding site" evidence="1">
    <location>
        <position position="57"/>
    </location>
    <ligand>
        <name>Mg(2+)</name>
        <dbReference type="ChEBI" id="CHEBI:18420"/>
    </ligand>
</feature>
<dbReference type="EC" id="2.7.8.7" evidence="1"/>
<dbReference type="EMBL" id="CP000388">
    <property type="protein sequence ID" value="ABG42210.1"/>
    <property type="molecule type" value="Genomic_DNA"/>
</dbReference>
<dbReference type="RefSeq" id="WP_011576429.1">
    <property type="nucleotide sequence ID" value="NC_008228.1"/>
</dbReference>
<dbReference type="SMR" id="Q15PH8"/>
<dbReference type="STRING" id="342610.Patl_3708"/>
<dbReference type="KEGG" id="pat:Patl_3708"/>
<dbReference type="eggNOG" id="COG0736">
    <property type="taxonomic scope" value="Bacteria"/>
</dbReference>
<dbReference type="HOGENOM" id="CLU_089696_3_1_6"/>
<dbReference type="OrthoDB" id="517356at2"/>
<dbReference type="Proteomes" id="UP000001981">
    <property type="component" value="Chromosome"/>
</dbReference>
<dbReference type="GO" id="GO:0005737">
    <property type="term" value="C:cytoplasm"/>
    <property type="evidence" value="ECO:0007669"/>
    <property type="project" value="UniProtKB-SubCell"/>
</dbReference>
<dbReference type="GO" id="GO:0008897">
    <property type="term" value="F:holo-[acyl-carrier-protein] synthase activity"/>
    <property type="evidence" value="ECO:0007669"/>
    <property type="project" value="UniProtKB-UniRule"/>
</dbReference>
<dbReference type="GO" id="GO:0000287">
    <property type="term" value="F:magnesium ion binding"/>
    <property type="evidence" value="ECO:0007669"/>
    <property type="project" value="UniProtKB-UniRule"/>
</dbReference>
<dbReference type="GO" id="GO:0006633">
    <property type="term" value="P:fatty acid biosynthetic process"/>
    <property type="evidence" value="ECO:0007669"/>
    <property type="project" value="UniProtKB-UniRule"/>
</dbReference>
<dbReference type="FunFam" id="3.90.470.20:FF:000001">
    <property type="entry name" value="Holo-[acyl-carrier-protein] synthase"/>
    <property type="match status" value="1"/>
</dbReference>
<dbReference type="Gene3D" id="3.90.470.20">
    <property type="entry name" value="4'-phosphopantetheinyl transferase domain"/>
    <property type="match status" value="1"/>
</dbReference>
<dbReference type="HAMAP" id="MF_00101">
    <property type="entry name" value="AcpS"/>
    <property type="match status" value="1"/>
</dbReference>
<dbReference type="InterPro" id="IPR008278">
    <property type="entry name" value="4-PPantetheinyl_Trfase_dom"/>
</dbReference>
<dbReference type="InterPro" id="IPR037143">
    <property type="entry name" value="4-PPantetheinyl_Trfase_dom_sf"/>
</dbReference>
<dbReference type="InterPro" id="IPR002582">
    <property type="entry name" value="ACPS"/>
</dbReference>
<dbReference type="InterPro" id="IPR004568">
    <property type="entry name" value="Ppantetheine-prot_Trfase_dom"/>
</dbReference>
<dbReference type="NCBIfam" id="TIGR00516">
    <property type="entry name" value="acpS"/>
    <property type="match status" value="1"/>
</dbReference>
<dbReference type="NCBIfam" id="TIGR00556">
    <property type="entry name" value="pantethn_trn"/>
    <property type="match status" value="1"/>
</dbReference>
<dbReference type="Pfam" id="PF01648">
    <property type="entry name" value="ACPS"/>
    <property type="match status" value="1"/>
</dbReference>
<dbReference type="SUPFAM" id="SSF56214">
    <property type="entry name" value="4'-phosphopantetheinyl transferase"/>
    <property type="match status" value="1"/>
</dbReference>
<organism>
    <name type="scientific">Pseudoalteromonas atlantica (strain T6c / ATCC BAA-1087)</name>
    <dbReference type="NCBI Taxonomy" id="3042615"/>
    <lineage>
        <taxon>Bacteria</taxon>
        <taxon>Pseudomonadati</taxon>
        <taxon>Pseudomonadota</taxon>
        <taxon>Gammaproteobacteria</taxon>
        <taxon>Alteromonadales</taxon>
        <taxon>Alteromonadaceae</taxon>
        <taxon>Paraglaciecola</taxon>
    </lineage>
</organism>
<protein>
    <recommendedName>
        <fullName evidence="1">Holo-[acyl-carrier-protein] synthase</fullName>
        <shortName evidence="1">Holo-ACP synthase</shortName>
        <ecNumber evidence="1">2.7.8.7</ecNumber>
    </recommendedName>
    <alternativeName>
        <fullName evidence="1">4'-phosphopantetheinyl transferase AcpS</fullName>
    </alternativeName>
</protein>
<name>ACPS_PSEA6</name>
<accession>Q15PH8</accession>
<comment type="function">
    <text evidence="1">Transfers the 4'-phosphopantetheine moiety from coenzyme A to a Ser of acyl-carrier-protein.</text>
</comment>
<comment type="catalytic activity">
    <reaction evidence="1">
        <text>apo-[ACP] + CoA = holo-[ACP] + adenosine 3',5'-bisphosphate + H(+)</text>
        <dbReference type="Rhea" id="RHEA:12068"/>
        <dbReference type="Rhea" id="RHEA-COMP:9685"/>
        <dbReference type="Rhea" id="RHEA-COMP:9690"/>
        <dbReference type="ChEBI" id="CHEBI:15378"/>
        <dbReference type="ChEBI" id="CHEBI:29999"/>
        <dbReference type="ChEBI" id="CHEBI:57287"/>
        <dbReference type="ChEBI" id="CHEBI:58343"/>
        <dbReference type="ChEBI" id="CHEBI:64479"/>
        <dbReference type="EC" id="2.7.8.7"/>
    </reaction>
</comment>
<comment type="cofactor">
    <cofactor evidence="1">
        <name>Mg(2+)</name>
        <dbReference type="ChEBI" id="CHEBI:18420"/>
    </cofactor>
</comment>
<comment type="subcellular location">
    <subcellularLocation>
        <location evidence="1">Cytoplasm</location>
    </subcellularLocation>
</comment>
<comment type="similarity">
    <text evidence="1">Belongs to the P-Pant transferase superfamily. AcpS family.</text>
</comment>
<reference key="1">
    <citation type="submission" date="2006-06" db="EMBL/GenBank/DDBJ databases">
        <title>Complete sequence of Pseudoalteromonas atlantica T6c.</title>
        <authorList>
            <consortium name="US DOE Joint Genome Institute"/>
            <person name="Copeland A."/>
            <person name="Lucas S."/>
            <person name="Lapidus A."/>
            <person name="Barry K."/>
            <person name="Detter J.C."/>
            <person name="Glavina del Rio T."/>
            <person name="Hammon N."/>
            <person name="Israni S."/>
            <person name="Dalin E."/>
            <person name="Tice H."/>
            <person name="Pitluck S."/>
            <person name="Saunders E."/>
            <person name="Brettin T."/>
            <person name="Bruce D."/>
            <person name="Han C."/>
            <person name="Tapia R."/>
            <person name="Gilna P."/>
            <person name="Schmutz J."/>
            <person name="Larimer F."/>
            <person name="Land M."/>
            <person name="Hauser L."/>
            <person name="Kyrpides N."/>
            <person name="Kim E."/>
            <person name="Karls A.C."/>
            <person name="Bartlett D."/>
            <person name="Higgins B.P."/>
            <person name="Richardson P."/>
        </authorList>
    </citation>
    <scope>NUCLEOTIDE SEQUENCE [LARGE SCALE GENOMIC DNA]</scope>
    <source>
        <strain>T6c / ATCC BAA-1087</strain>
    </source>
</reference>
<gene>
    <name evidence="1" type="primary">acpS</name>
    <name type="ordered locus">Patl_3708</name>
</gene>
<keyword id="KW-0963">Cytoplasm</keyword>
<keyword id="KW-0275">Fatty acid biosynthesis</keyword>
<keyword id="KW-0276">Fatty acid metabolism</keyword>
<keyword id="KW-0444">Lipid biosynthesis</keyword>
<keyword id="KW-0443">Lipid metabolism</keyword>
<keyword id="KW-0460">Magnesium</keyword>
<keyword id="KW-0479">Metal-binding</keyword>
<keyword id="KW-0808">Transferase</keyword>
<evidence type="ECO:0000255" key="1">
    <source>
        <dbReference type="HAMAP-Rule" id="MF_00101"/>
    </source>
</evidence>
<proteinExistence type="inferred from homology"/>